<name>KLHL4_HUMAN</name>
<dbReference type="EMBL" id="AF284765">
    <property type="protein sequence ID" value="AAK49441.1"/>
    <property type="molecule type" value="mRNA"/>
</dbReference>
<dbReference type="EMBL" id="AF284766">
    <property type="protein sequence ID" value="AAK49442.1"/>
    <property type="molecule type" value="mRNA"/>
</dbReference>
<dbReference type="EMBL" id="AB051474">
    <property type="protein sequence ID" value="BAB21778.1"/>
    <property type="status" value="ALT_INIT"/>
    <property type="molecule type" value="mRNA"/>
</dbReference>
<dbReference type="EMBL" id="AL832514">
    <property type="protein sequence ID" value="CAI46201.1"/>
    <property type="molecule type" value="mRNA"/>
</dbReference>
<dbReference type="EMBL" id="AL035424">
    <property type="status" value="NOT_ANNOTATED_CDS"/>
    <property type="molecule type" value="Genomic_DNA"/>
</dbReference>
<dbReference type="EMBL" id="Z95400">
    <property type="status" value="NOT_ANNOTATED_CDS"/>
    <property type="molecule type" value="Genomic_DNA"/>
</dbReference>
<dbReference type="EMBL" id="CH471104">
    <property type="protein sequence ID" value="EAW98553.1"/>
    <property type="molecule type" value="Genomic_DNA"/>
</dbReference>
<dbReference type="EMBL" id="BC140839">
    <property type="protein sequence ID" value="AAI40840.1"/>
    <property type="molecule type" value="mRNA"/>
</dbReference>
<dbReference type="EMBL" id="BC140840">
    <property type="protein sequence ID" value="AAI40841.1"/>
    <property type="molecule type" value="mRNA"/>
</dbReference>
<dbReference type="EMBL" id="AK022715">
    <property type="protein sequence ID" value="BAB14199.1"/>
    <property type="status" value="ALT_INIT"/>
    <property type="molecule type" value="mRNA"/>
</dbReference>
<dbReference type="CCDS" id="CCDS14456.1">
    <molecule id="Q9C0H6-2"/>
</dbReference>
<dbReference type="CCDS" id="CCDS14457.1">
    <molecule id="Q9C0H6-1"/>
</dbReference>
<dbReference type="RefSeq" id="NP_061990.2">
    <molecule id="Q9C0H6-1"/>
    <property type="nucleotide sequence ID" value="NM_019117.4"/>
</dbReference>
<dbReference type="RefSeq" id="NP_476503.1">
    <molecule id="Q9C0H6-2"/>
    <property type="nucleotide sequence ID" value="NM_057162.3"/>
</dbReference>
<dbReference type="SMR" id="Q9C0H6"/>
<dbReference type="BioGRID" id="121035">
    <property type="interactions" value="34"/>
</dbReference>
<dbReference type="ComplexPortal" id="CPX-8061">
    <property type="entry name" value="CRL3 E3 ubiquitin ligase complex, KLHL4 variant"/>
</dbReference>
<dbReference type="FunCoup" id="Q9C0H6">
    <property type="interactions" value="224"/>
</dbReference>
<dbReference type="IntAct" id="Q9C0H6">
    <property type="interactions" value="9"/>
</dbReference>
<dbReference type="STRING" id="9606.ENSP00000362206"/>
<dbReference type="iPTMnet" id="Q9C0H6"/>
<dbReference type="PhosphoSitePlus" id="Q9C0H6"/>
<dbReference type="BioMuta" id="KLHL4"/>
<dbReference type="DMDM" id="17378645"/>
<dbReference type="jPOST" id="Q9C0H6"/>
<dbReference type="MassIVE" id="Q9C0H6"/>
<dbReference type="PaxDb" id="9606-ENSP00000362206"/>
<dbReference type="PeptideAtlas" id="Q9C0H6"/>
<dbReference type="ProteomicsDB" id="80044">
    <molecule id="Q9C0H6-1"/>
</dbReference>
<dbReference type="ProteomicsDB" id="80045">
    <molecule id="Q9C0H6-2"/>
</dbReference>
<dbReference type="Antibodypedia" id="28423">
    <property type="antibodies" value="150 antibodies from 24 providers"/>
</dbReference>
<dbReference type="DNASU" id="56062"/>
<dbReference type="Ensembl" id="ENST00000373114.4">
    <molecule id="Q9C0H6-2"/>
    <property type="protein sequence ID" value="ENSP00000362206.4"/>
    <property type="gene ID" value="ENSG00000102271.14"/>
</dbReference>
<dbReference type="Ensembl" id="ENST00000373119.9">
    <molecule id="Q9C0H6-1"/>
    <property type="protein sequence ID" value="ENSP00000362211.4"/>
    <property type="gene ID" value="ENSG00000102271.14"/>
</dbReference>
<dbReference type="Ensembl" id="ENST00000652270.1">
    <molecule id="Q9C0H6-1"/>
    <property type="protein sequence ID" value="ENSP00000498718.1"/>
    <property type="gene ID" value="ENSG00000102271.14"/>
</dbReference>
<dbReference type="GeneID" id="56062"/>
<dbReference type="KEGG" id="hsa:56062"/>
<dbReference type="MANE-Select" id="ENST00000373119.9">
    <property type="protein sequence ID" value="ENSP00000362211.4"/>
    <property type="RefSeq nucleotide sequence ID" value="NM_019117.5"/>
    <property type="RefSeq protein sequence ID" value="NP_061990.2"/>
</dbReference>
<dbReference type="UCSC" id="uc004efa.3">
    <molecule id="Q9C0H6-1"/>
    <property type="organism name" value="human"/>
</dbReference>
<dbReference type="AGR" id="HGNC:6355"/>
<dbReference type="CTD" id="56062"/>
<dbReference type="DisGeNET" id="56062"/>
<dbReference type="GeneCards" id="KLHL4"/>
<dbReference type="HGNC" id="HGNC:6355">
    <property type="gene designation" value="KLHL4"/>
</dbReference>
<dbReference type="HPA" id="ENSG00000102271">
    <property type="expression patterns" value="Tissue enhanced (adrenal gland, brain, ovary)"/>
</dbReference>
<dbReference type="MIM" id="300348">
    <property type="type" value="gene"/>
</dbReference>
<dbReference type="neXtProt" id="NX_Q9C0H6"/>
<dbReference type="OpenTargets" id="ENSG00000102271"/>
<dbReference type="PharmGKB" id="PA30145"/>
<dbReference type="VEuPathDB" id="HostDB:ENSG00000102271"/>
<dbReference type="eggNOG" id="KOG4441">
    <property type="taxonomic scope" value="Eukaryota"/>
</dbReference>
<dbReference type="GeneTree" id="ENSGT00940000159818"/>
<dbReference type="HOGENOM" id="CLU_004253_12_0_1"/>
<dbReference type="InParanoid" id="Q9C0H6"/>
<dbReference type="OMA" id="AWTVMPP"/>
<dbReference type="OrthoDB" id="45365at2759"/>
<dbReference type="PAN-GO" id="Q9C0H6">
    <property type="GO annotations" value="0 GO annotations based on evolutionary models"/>
</dbReference>
<dbReference type="PhylomeDB" id="Q9C0H6"/>
<dbReference type="TreeFam" id="TF329218"/>
<dbReference type="PathwayCommons" id="Q9C0H6"/>
<dbReference type="SignaLink" id="Q9C0H6"/>
<dbReference type="BioGRID-ORCS" id="56062">
    <property type="hits" value="9 hits in 813 CRISPR screens"/>
</dbReference>
<dbReference type="ChiTaRS" id="KLHL4">
    <property type="organism name" value="human"/>
</dbReference>
<dbReference type="GenomeRNAi" id="56062"/>
<dbReference type="Pharos" id="Q9C0H6">
    <property type="development level" value="Tdark"/>
</dbReference>
<dbReference type="PRO" id="PR:Q9C0H6"/>
<dbReference type="Proteomes" id="UP000005640">
    <property type="component" value="Chromosome X"/>
</dbReference>
<dbReference type="RNAct" id="Q9C0H6">
    <property type="molecule type" value="protein"/>
</dbReference>
<dbReference type="Bgee" id="ENSG00000102271">
    <property type="expression patterns" value="Expressed in right adrenal gland cortex and 106 other cell types or tissues"/>
</dbReference>
<dbReference type="ExpressionAtlas" id="Q9C0H6">
    <property type="expression patterns" value="baseline and differential"/>
</dbReference>
<dbReference type="GO" id="GO:0034451">
    <property type="term" value="C:centriolar satellite"/>
    <property type="evidence" value="ECO:0000314"/>
    <property type="project" value="HPA"/>
</dbReference>
<dbReference type="GO" id="GO:0036064">
    <property type="term" value="C:ciliary basal body"/>
    <property type="evidence" value="ECO:0000314"/>
    <property type="project" value="HPA"/>
</dbReference>
<dbReference type="GO" id="GO:0005929">
    <property type="term" value="C:cilium"/>
    <property type="evidence" value="ECO:0000314"/>
    <property type="project" value="HPA"/>
</dbReference>
<dbReference type="GO" id="GO:0031463">
    <property type="term" value="C:Cul3-RING ubiquitin ligase complex"/>
    <property type="evidence" value="ECO:0000318"/>
    <property type="project" value="GO_Central"/>
</dbReference>
<dbReference type="GO" id="GO:0005737">
    <property type="term" value="C:cytoplasm"/>
    <property type="evidence" value="ECO:0000250"/>
    <property type="project" value="UniProtKB"/>
</dbReference>
<dbReference type="GO" id="GO:0015630">
    <property type="term" value="C:microtubule cytoskeleton"/>
    <property type="evidence" value="ECO:0000314"/>
    <property type="project" value="HPA"/>
</dbReference>
<dbReference type="GO" id="GO:0003779">
    <property type="term" value="F:actin binding"/>
    <property type="evidence" value="ECO:0007669"/>
    <property type="project" value="UniProtKB-KW"/>
</dbReference>
<dbReference type="GO" id="GO:1990756">
    <property type="term" value="F:ubiquitin-like ligase-substrate adaptor activity"/>
    <property type="evidence" value="ECO:0000318"/>
    <property type="project" value="GO_Central"/>
</dbReference>
<dbReference type="GO" id="GO:0043161">
    <property type="term" value="P:proteasome-mediated ubiquitin-dependent protein catabolic process"/>
    <property type="evidence" value="ECO:0000318"/>
    <property type="project" value="GO_Central"/>
</dbReference>
<dbReference type="CDD" id="cd18510">
    <property type="entry name" value="BACK_KLHL4"/>
    <property type="match status" value="1"/>
</dbReference>
<dbReference type="FunFam" id="1.25.40.420:FF:000001">
    <property type="entry name" value="Kelch-like family member 12"/>
    <property type="match status" value="1"/>
</dbReference>
<dbReference type="FunFam" id="2.120.10.80:FF:000063">
    <property type="entry name" value="Kelch-like protein 4 isoform 1"/>
    <property type="match status" value="1"/>
</dbReference>
<dbReference type="FunFam" id="2.120.10.80:FF:000086">
    <property type="entry name" value="Kelch-like protein 4 isoform 1"/>
    <property type="match status" value="1"/>
</dbReference>
<dbReference type="FunFam" id="3.30.710.10:FF:000027">
    <property type="entry name" value="Kelch-like protein 4 isoform 1"/>
    <property type="match status" value="1"/>
</dbReference>
<dbReference type="Gene3D" id="1.25.40.420">
    <property type="match status" value="1"/>
</dbReference>
<dbReference type="Gene3D" id="2.120.10.80">
    <property type="entry name" value="Kelch-type beta propeller"/>
    <property type="match status" value="2"/>
</dbReference>
<dbReference type="Gene3D" id="3.30.710.10">
    <property type="entry name" value="Potassium Channel Kv1.1, Chain A"/>
    <property type="match status" value="1"/>
</dbReference>
<dbReference type="InterPro" id="IPR011705">
    <property type="entry name" value="BACK"/>
</dbReference>
<dbReference type="InterPro" id="IPR056737">
    <property type="entry name" value="Beta-prop_ATRN-MKLN-like"/>
</dbReference>
<dbReference type="InterPro" id="IPR000210">
    <property type="entry name" value="BTB/POZ_dom"/>
</dbReference>
<dbReference type="InterPro" id="IPR015915">
    <property type="entry name" value="Kelch-typ_b-propeller"/>
</dbReference>
<dbReference type="InterPro" id="IPR006652">
    <property type="entry name" value="Kelch_1"/>
</dbReference>
<dbReference type="InterPro" id="IPR011333">
    <property type="entry name" value="SKP1/BTB/POZ_sf"/>
</dbReference>
<dbReference type="PANTHER" id="PTHR24412">
    <property type="entry name" value="KELCH PROTEIN"/>
    <property type="match status" value="1"/>
</dbReference>
<dbReference type="PANTHER" id="PTHR24412:SF74">
    <property type="entry name" value="KELCH-LIKE PROTEIN 4"/>
    <property type="match status" value="1"/>
</dbReference>
<dbReference type="Pfam" id="PF07707">
    <property type="entry name" value="BACK"/>
    <property type="match status" value="1"/>
</dbReference>
<dbReference type="Pfam" id="PF24981">
    <property type="entry name" value="Beta-prop_ATRN-LZTR1"/>
    <property type="match status" value="1"/>
</dbReference>
<dbReference type="Pfam" id="PF00651">
    <property type="entry name" value="BTB"/>
    <property type="match status" value="1"/>
</dbReference>
<dbReference type="PRINTS" id="PR00501">
    <property type="entry name" value="KELCHREPEAT"/>
</dbReference>
<dbReference type="SMART" id="SM00875">
    <property type="entry name" value="BACK"/>
    <property type="match status" value="1"/>
</dbReference>
<dbReference type="SMART" id="SM00225">
    <property type="entry name" value="BTB"/>
    <property type="match status" value="1"/>
</dbReference>
<dbReference type="SMART" id="SM00612">
    <property type="entry name" value="Kelch"/>
    <property type="match status" value="6"/>
</dbReference>
<dbReference type="SUPFAM" id="SSF117281">
    <property type="entry name" value="Kelch motif"/>
    <property type="match status" value="2"/>
</dbReference>
<dbReference type="SUPFAM" id="SSF54695">
    <property type="entry name" value="POZ domain"/>
    <property type="match status" value="1"/>
</dbReference>
<dbReference type="PROSITE" id="PS50097">
    <property type="entry name" value="BTB"/>
    <property type="match status" value="1"/>
</dbReference>
<organism>
    <name type="scientific">Homo sapiens</name>
    <name type="common">Human</name>
    <dbReference type="NCBI Taxonomy" id="9606"/>
    <lineage>
        <taxon>Eukaryota</taxon>
        <taxon>Metazoa</taxon>
        <taxon>Chordata</taxon>
        <taxon>Craniata</taxon>
        <taxon>Vertebrata</taxon>
        <taxon>Euteleostomi</taxon>
        <taxon>Mammalia</taxon>
        <taxon>Eutheria</taxon>
        <taxon>Euarchontoglires</taxon>
        <taxon>Primates</taxon>
        <taxon>Haplorrhini</taxon>
        <taxon>Catarrhini</taxon>
        <taxon>Hominidae</taxon>
        <taxon>Homo</taxon>
    </lineage>
</organism>
<evidence type="ECO:0000255" key="1">
    <source>
        <dbReference type="PROSITE-ProRule" id="PRU00037"/>
    </source>
</evidence>
<evidence type="ECO:0000256" key="2">
    <source>
        <dbReference type="SAM" id="MobiDB-lite"/>
    </source>
</evidence>
<evidence type="ECO:0000303" key="3">
    <source>
    </source>
</evidence>
<evidence type="ECO:0000303" key="4">
    <source>
    </source>
</evidence>
<evidence type="ECO:0000305" key="5"/>
<gene>
    <name type="primary">KLHL4</name>
    <name type="synonym">KIAA1687</name>
</gene>
<protein>
    <recommendedName>
        <fullName>Kelch-like protein 4</fullName>
    </recommendedName>
</protein>
<sequence length="718" mass="80245">MSVSGKKEFDVKQILRLRWRWFSHPFQGSTNTGSCLQQEGYEHRGTPVQGRLKSHSRDRNGLKKSNSPVHHNILAPVPGPAPAHQRAVQNLQQHNLIVHFQANEDTPKSVPEKNLFKEACEKRAQDLEMMADDNIEDSTARLDTQHSEDMNATRSEEQFHVINHAEQTLRKMENYLKEKQLCDVLLIAGHLRIPAHRLVLSAVSDYFAAMFTNDVLEAKQEEVRMEGVDPNALNSLVQYAYTGVLQLKEDTIESLLAAACLLQLTQVIDVCSNFLIKQLHPSNCLGIRSFGDAQGCTELLNVAHKYTMEHFIEVIKNQEFLLLPANEISKLLCSDDINVPDEETIFHALMQWVGHDVQNRQGELGMLLSYIRLPLLPPQLLADLETSSMFTGDLECQKLLMEAMKYHLLPERRSMMQSPRTKPRKSTVGALYAVGGMDAMKGTTTIEKYDLRTNSWLHIGTMNGRRLQFGVAVIDNKLYVVGGRDGLKTLNTVECFNPVGKIWTVMPPMSTHRHGLGVATLEGPMYAVGGHDGWSYLNTVERWDPEGRQWNYVASMSTPRSTVGVVALNNKLYAIGGRDGSSCLKSMEYFDPHTNKWSLCAPMSKRRGGVGVATYNGFLYVVGGHDAPASNHCSRLSDCVERYDPKGDSWSTVAPLSVPRDAVAVCPLGDKLYVVGGYDGHTYLNTVESYDAQRNEWKEEVPVNIGRAGACVVVVKLP</sequence>
<accession>Q9C0H6</accession>
<accession>B2RTW2</accession>
<accession>Q9Y3J5</accession>
<reference key="1">
    <citation type="journal article" date="2001" name="Genomics">
        <title>Identification and characterization of KLHL4, a novel human homologue of the Drosophila Kelch gene that maps within the X-linked cleft palate and ankyloglossia (CPX) critical region.</title>
        <authorList>
            <person name="Braybrook C."/>
            <person name="Warry G."/>
            <person name="Howell G."/>
            <person name="Arnason A."/>
            <person name="Bjornsson A."/>
            <person name="Moore G.E."/>
            <person name="Ross M.T."/>
            <person name="Stanier P."/>
        </authorList>
    </citation>
    <scope>NUCLEOTIDE SEQUENCE [MRNA] (ISOFORMS 1 AND 2)</scope>
</reference>
<reference key="2">
    <citation type="journal article" date="2000" name="DNA Res.">
        <title>Prediction of the coding sequences of unidentified human genes. XIX. The complete sequences of 100 new cDNA clones from brain which code for large proteins in vitro.</title>
        <authorList>
            <person name="Nagase T."/>
            <person name="Kikuno R."/>
            <person name="Hattori A."/>
            <person name="Kondo Y."/>
            <person name="Okumura K."/>
            <person name="Ohara O."/>
        </authorList>
    </citation>
    <scope>NUCLEOTIDE SEQUENCE [LARGE SCALE MRNA] (ISOFORM 1)</scope>
    <source>
        <tissue>Brain</tissue>
    </source>
</reference>
<reference key="3">
    <citation type="journal article" date="2007" name="BMC Genomics">
        <title>The full-ORF clone resource of the German cDNA consortium.</title>
        <authorList>
            <person name="Bechtel S."/>
            <person name="Rosenfelder H."/>
            <person name="Duda A."/>
            <person name="Schmidt C.P."/>
            <person name="Ernst U."/>
            <person name="Wellenreuther R."/>
            <person name="Mehrle A."/>
            <person name="Schuster C."/>
            <person name="Bahr A."/>
            <person name="Bloecker H."/>
            <person name="Heubner D."/>
            <person name="Hoerlein A."/>
            <person name="Michel G."/>
            <person name="Wedler H."/>
            <person name="Koehrer K."/>
            <person name="Ottenwaelder B."/>
            <person name="Poustka A."/>
            <person name="Wiemann S."/>
            <person name="Schupp I."/>
        </authorList>
    </citation>
    <scope>NUCLEOTIDE SEQUENCE [LARGE SCALE MRNA] (ISOFORM 1)</scope>
    <source>
        <tissue>Lymph node</tissue>
    </source>
</reference>
<reference key="4">
    <citation type="journal article" date="2005" name="Nature">
        <title>The DNA sequence of the human X chromosome.</title>
        <authorList>
            <person name="Ross M.T."/>
            <person name="Grafham D.V."/>
            <person name="Coffey A.J."/>
            <person name="Scherer S."/>
            <person name="McLay K."/>
            <person name="Muzny D."/>
            <person name="Platzer M."/>
            <person name="Howell G.R."/>
            <person name="Burrows C."/>
            <person name="Bird C.P."/>
            <person name="Frankish A."/>
            <person name="Lovell F.L."/>
            <person name="Howe K.L."/>
            <person name="Ashurst J.L."/>
            <person name="Fulton R.S."/>
            <person name="Sudbrak R."/>
            <person name="Wen G."/>
            <person name="Jones M.C."/>
            <person name="Hurles M.E."/>
            <person name="Andrews T.D."/>
            <person name="Scott C.E."/>
            <person name="Searle S."/>
            <person name="Ramser J."/>
            <person name="Whittaker A."/>
            <person name="Deadman R."/>
            <person name="Carter N.P."/>
            <person name="Hunt S.E."/>
            <person name="Chen R."/>
            <person name="Cree A."/>
            <person name="Gunaratne P."/>
            <person name="Havlak P."/>
            <person name="Hodgson A."/>
            <person name="Metzker M.L."/>
            <person name="Richards S."/>
            <person name="Scott G."/>
            <person name="Steffen D."/>
            <person name="Sodergren E."/>
            <person name="Wheeler D.A."/>
            <person name="Worley K.C."/>
            <person name="Ainscough R."/>
            <person name="Ambrose K.D."/>
            <person name="Ansari-Lari M.A."/>
            <person name="Aradhya S."/>
            <person name="Ashwell R.I."/>
            <person name="Babbage A.K."/>
            <person name="Bagguley C.L."/>
            <person name="Ballabio A."/>
            <person name="Banerjee R."/>
            <person name="Barker G.E."/>
            <person name="Barlow K.F."/>
            <person name="Barrett I.P."/>
            <person name="Bates K.N."/>
            <person name="Beare D.M."/>
            <person name="Beasley H."/>
            <person name="Beasley O."/>
            <person name="Beck A."/>
            <person name="Bethel G."/>
            <person name="Blechschmidt K."/>
            <person name="Brady N."/>
            <person name="Bray-Allen S."/>
            <person name="Bridgeman A.M."/>
            <person name="Brown A.J."/>
            <person name="Brown M.J."/>
            <person name="Bonnin D."/>
            <person name="Bruford E.A."/>
            <person name="Buhay C."/>
            <person name="Burch P."/>
            <person name="Burford D."/>
            <person name="Burgess J."/>
            <person name="Burrill W."/>
            <person name="Burton J."/>
            <person name="Bye J.M."/>
            <person name="Carder C."/>
            <person name="Carrel L."/>
            <person name="Chako J."/>
            <person name="Chapman J.C."/>
            <person name="Chavez D."/>
            <person name="Chen E."/>
            <person name="Chen G."/>
            <person name="Chen Y."/>
            <person name="Chen Z."/>
            <person name="Chinault C."/>
            <person name="Ciccodicola A."/>
            <person name="Clark S.Y."/>
            <person name="Clarke G."/>
            <person name="Clee C.M."/>
            <person name="Clegg S."/>
            <person name="Clerc-Blankenburg K."/>
            <person name="Clifford K."/>
            <person name="Cobley V."/>
            <person name="Cole C.G."/>
            <person name="Conquer J.S."/>
            <person name="Corby N."/>
            <person name="Connor R.E."/>
            <person name="David R."/>
            <person name="Davies J."/>
            <person name="Davis C."/>
            <person name="Davis J."/>
            <person name="Delgado O."/>
            <person name="Deshazo D."/>
            <person name="Dhami P."/>
            <person name="Ding Y."/>
            <person name="Dinh H."/>
            <person name="Dodsworth S."/>
            <person name="Draper H."/>
            <person name="Dugan-Rocha S."/>
            <person name="Dunham A."/>
            <person name="Dunn M."/>
            <person name="Durbin K.J."/>
            <person name="Dutta I."/>
            <person name="Eades T."/>
            <person name="Ellwood M."/>
            <person name="Emery-Cohen A."/>
            <person name="Errington H."/>
            <person name="Evans K.L."/>
            <person name="Faulkner L."/>
            <person name="Francis F."/>
            <person name="Frankland J."/>
            <person name="Fraser A.E."/>
            <person name="Galgoczy P."/>
            <person name="Gilbert J."/>
            <person name="Gill R."/>
            <person name="Gloeckner G."/>
            <person name="Gregory S.G."/>
            <person name="Gribble S."/>
            <person name="Griffiths C."/>
            <person name="Grocock R."/>
            <person name="Gu Y."/>
            <person name="Gwilliam R."/>
            <person name="Hamilton C."/>
            <person name="Hart E.A."/>
            <person name="Hawes A."/>
            <person name="Heath P.D."/>
            <person name="Heitmann K."/>
            <person name="Hennig S."/>
            <person name="Hernandez J."/>
            <person name="Hinzmann B."/>
            <person name="Ho S."/>
            <person name="Hoffs M."/>
            <person name="Howden P.J."/>
            <person name="Huckle E.J."/>
            <person name="Hume J."/>
            <person name="Hunt P.J."/>
            <person name="Hunt A.R."/>
            <person name="Isherwood J."/>
            <person name="Jacob L."/>
            <person name="Johnson D."/>
            <person name="Jones S."/>
            <person name="de Jong P.J."/>
            <person name="Joseph S.S."/>
            <person name="Keenan S."/>
            <person name="Kelly S."/>
            <person name="Kershaw J.K."/>
            <person name="Khan Z."/>
            <person name="Kioschis P."/>
            <person name="Klages S."/>
            <person name="Knights A.J."/>
            <person name="Kosiura A."/>
            <person name="Kovar-Smith C."/>
            <person name="Laird G.K."/>
            <person name="Langford C."/>
            <person name="Lawlor S."/>
            <person name="Leversha M."/>
            <person name="Lewis L."/>
            <person name="Liu W."/>
            <person name="Lloyd C."/>
            <person name="Lloyd D.M."/>
            <person name="Loulseged H."/>
            <person name="Loveland J.E."/>
            <person name="Lovell J.D."/>
            <person name="Lozado R."/>
            <person name="Lu J."/>
            <person name="Lyne R."/>
            <person name="Ma J."/>
            <person name="Maheshwari M."/>
            <person name="Matthews L.H."/>
            <person name="McDowall J."/>
            <person name="McLaren S."/>
            <person name="McMurray A."/>
            <person name="Meidl P."/>
            <person name="Meitinger T."/>
            <person name="Milne S."/>
            <person name="Miner G."/>
            <person name="Mistry S.L."/>
            <person name="Morgan M."/>
            <person name="Morris S."/>
            <person name="Mueller I."/>
            <person name="Mullikin J.C."/>
            <person name="Nguyen N."/>
            <person name="Nordsiek G."/>
            <person name="Nyakatura G."/>
            <person name="O'dell C.N."/>
            <person name="Okwuonu G."/>
            <person name="Palmer S."/>
            <person name="Pandian R."/>
            <person name="Parker D."/>
            <person name="Parrish J."/>
            <person name="Pasternak S."/>
            <person name="Patel D."/>
            <person name="Pearce A.V."/>
            <person name="Pearson D.M."/>
            <person name="Pelan S.E."/>
            <person name="Perez L."/>
            <person name="Porter K.M."/>
            <person name="Ramsey Y."/>
            <person name="Reichwald K."/>
            <person name="Rhodes S."/>
            <person name="Ridler K.A."/>
            <person name="Schlessinger D."/>
            <person name="Schueler M.G."/>
            <person name="Sehra H.K."/>
            <person name="Shaw-Smith C."/>
            <person name="Shen H."/>
            <person name="Sheridan E.M."/>
            <person name="Shownkeen R."/>
            <person name="Skuce C.D."/>
            <person name="Smith M.L."/>
            <person name="Sotheran E.C."/>
            <person name="Steingruber H.E."/>
            <person name="Steward C.A."/>
            <person name="Storey R."/>
            <person name="Swann R.M."/>
            <person name="Swarbreck D."/>
            <person name="Tabor P.E."/>
            <person name="Taudien S."/>
            <person name="Taylor T."/>
            <person name="Teague B."/>
            <person name="Thomas K."/>
            <person name="Thorpe A."/>
            <person name="Timms K."/>
            <person name="Tracey A."/>
            <person name="Trevanion S."/>
            <person name="Tromans A.C."/>
            <person name="d'Urso M."/>
            <person name="Verduzco D."/>
            <person name="Villasana D."/>
            <person name="Waldron L."/>
            <person name="Wall M."/>
            <person name="Wang Q."/>
            <person name="Warren J."/>
            <person name="Warry G.L."/>
            <person name="Wei X."/>
            <person name="West A."/>
            <person name="Whitehead S.L."/>
            <person name="Whiteley M.N."/>
            <person name="Wilkinson J.E."/>
            <person name="Willey D.L."/>
            <person name="Williams G."/>
            <person name="Williams L."/>
            <person name="Williamson A."/>
            <person name="Williamson H."/>
            <person name="Wilming L."/>
            <person name="Woodmansey R.L."/>
            <person name="Wray P.W."/>
            <person name="Yen J."/>
            <person name="Zhang J."/>
            <person name="Zhou J."/>
            <person name="Zoghbi H."/>
            <person name="Zorilla S."/>
            <person name="Buck D."/>
            <person name="Reinhardt R."/>
            <person name="Poustka A."/>
            <person name="Rosenthal A."/>
            <person name="Lehrach H."/>
            <person name="Meindl A."/>
            <person name="Minx P.J."/>
            <person name="Hillier L.W."/>
            <person name="Willard H.F."/>
            <person name="Wilson R.K."/>
            <person name="Waterston R.H."/>
            <person name="Rice C.M."/>
            <person name="Vaudin M."/>
            <person name="Coulson A."/>
            <person name="Nelson D.L."/>
            <person name="Weinstock G."/>
            <person name="Sulston J.E."/>
            <person name="Durbin R.M."/>
            <person name="Hubbard T."/>
            <person name="Gibbs R.A."/>
            <person name="Beck S."/>
            <person name="Rogers J."/>
            <person name="Bentley D.R."/>
        </authorList>
    </citation>
    <scope>NUCLEOTIDE SEQUENCE [LARGE SCALE GENOMIC DNA]</scope>
</reference>
<reference key="5">
    <citation type="submission" date="2005-09" db="EMBL/GenBank/DDBJ databases">
        <authorList>
            <person name="Mural R.J."/>
            <person name="Istrail S."/>
            <person name="Sutton G.G."/>
            <person name="Florea L."/>
            <person name="Halpern A.L."/>
            <person name="Mobarry C.M."/>
            <person name="Lippert R."/>
            <person name="Walenz B."/>
            <person name="Shatkay H."/>
            <person name="Dew I."/>
            <person name="Miller J.R."/>
            <person name="Flanigan M.J."/>
            <person name="Edwards N.J."/>
            <person name="Bolanos R."/>
            <person name="Fasulo D."/>
            <person name="Halldorsson B.V."/>
            <person name="Hannenhalli S."/>
            <person name="Turner R."/>
            <person name="Yooseph S."/>
            <person name="Lu F."/>
            <person name="Nusskern D.R."/>
            <person name="Shue B.C."/>
            <person name="Zheng X.H."/>
            <person name="Zhong F."/>
            <person name="Delcher A.L."/>
            <person name="Huson D.H."/>
            <person name="Kravitz S.A."/>
            <person name="Mouchard L."/>
            <person name="Reinert K."/>
            <person name="Remington K.A."/>
            <person name="Clark A.G."/>
            <person name="Waterman M.S."/>
            <person name="Eichler E.E."/>
            <person name="Adams M.D."/>
            <person name="Hunkapiller M.W."/>
            <person name="Myers E.W."/>
            <person name="Venter J.C."/>
        </authorList>
    </citation>
    <scope>NUCLEOTIDE SEQUENCE [LARGE SCALE GENOMIC DNA]</scope>
</reference>
<reference key="6">
    <citation type="journal article" date="2004" name="Genome Res.">
        <title>The status, quality, and expansion of the NIH full-length cDNA project: the Mammalian Gene Collection (MGC).</title>
        <authorList>
            <consortium name="The MGC Project Team"/>
        </authorList>
    </citation>
    <scope>NUCLEOTIDE SEQUENCE [LARGE SCALE MRNA] (ISOFORM 2)</scope>
    <source>
        <tissue>Brain</tissue>
    </source>
</reference>
<reference key="7">
    <citation type="journal article" date="2004" name="Nat. Genet.">
        <title>Complete sequencing and characterization of 21,243 full-length human cDNAs.</title>
        <authorList>
            <person name="Ota T."/>
            <person name="Suzuki Y."/>
            <person name="Nishikawa T."/>
            <person name="Otsuki T."/>
            <person name="Sugiyama T."/>
            <person name="Irie R."/>
            <person name="Wakamatsu A."/>
            <person name="Hayashi K."/>
            <person name="Sato H."/>
            <person name="Nagai K."/>
            <person name="Kimura K."/>
            <person name="Makita H."/>
            <person name="Sekine M."/>
            <person name="Obayashi M."/>
            <person name="Nishi T."/>
            <person name="Shibahara T."/>
            <person name="Tanaka T."/>
            <person name="Ishii S."/>
            <person name="Yamamoto J."/>
            <person name="Saito K."/>
            <person name="Kawai Y."/>
            <person name="Isono Y."/>
            <person name="Nakamura Y."/>
            <person name="Nagahari K."/>
            <person name="Murakami K."/>
            <person name="Yasuda T."/>
            <person name="Iwayanagi T."/>
            <person name="Wagatsuma M."/>
            <person name="Shiratori A."/>
            <person name="Sudo H."/>
            <person name="Hosoiri T."/>
            <person name="Kaku Y."/>
            <person name="Kodaira H."/>
            <person name="Kondo H."/>
            <person name="Sugawara M."/>
            <person name="Takahashi M."/>
            <person name="Kanda K."/>
            <person name="Yokoi T."/>
            <person name="Furuya T."/>
            <person name="Kikkawa E."/>
            <person name="Omura Y."/>
            <person name="Abe K."/>
            <person name="Kamihara K."/>
            <person name="Katsuta N."/>
            <person name="Sato K."/>
            <person name="Tanikawa M."/>
            <person name="Yamazaki M."/>
            <person name="Ninomiya K."/>
            <person name="Ishibashi T."/>
            <person name="Yamashita H."/>
            <person name="Murakawa K."/>
            <person name="Fujimori K."/>
            <person name="Tanai H."/>
            <person name="Kimata M."/>
            <person name="Watanabe M."/>
            <person name="Hiraoka S."/>
            <person name="Chiba Y."/>
            <person name="Ishida S."/>
            <person name="Ono Y."/>
            <person name="Takiguchi S."/>
            <person name="Watanabe S."/>
            <person name="Yosida M."/>
            <person name="Hotuta T."/>
            <person name="Kusano J."/>
            <person name="Kanehori K."/>
            <person name="Takahashi-Fujii A."/>
            <person name="Hara H."/>
            <person name="Tanase T.-O."/>
            <person name="Nomura Y."/>
            <person name="Togiya S."/>
            <person name="Komai F."/>
            <person name="Hara R."/>
            <person name="Takeuchi K."/>
            <person name="Arita M."/>
            <person name="Imose N."/>
            <person name="Musashino K."/>
            <person name="Yuuki H."/>
            <person name="Oshima A."/>
            <person name="Sasaki N."/>
            <person name="Aotsuka S."/>
            <person name="Yoshikawa Y."/>
            <person name="Matsunawa H."/>
            <person name="Ichihara T."/>
            <person name="Shiohata N."/>
            <person name="Sano S."/>
            <person name="Moriya S."/>
            <person name="Momiyama H."/>
            <person name="Satoh N."/>
            <person name="Takami S."/>
            <person name="Terashima Y."/>
            <person name="Suzuki O."/>
            <person name="Nakagawa S."/>
            <person name="Senoh A."/>
            <person name="Mizoguchi H."/>
            <person name="Goto Y."/>
            <person name="Shimizu F."/>
            <person name="Wakebe H."/>
            <person name="Hishigaki H."/>
            <person name="Watanabe T."/>
            <person name="Sugiyama A."/>
            <person name="Takemoto M."/>
            <person name="Kawakami B."/>
            <person name="Yamazaki M."/>
            <person name="Watanabe K."/>
            <person name="Kumagai A."/>
            <person name="Itakura S."/>
            <person name="Fukuzumi Y."/>
            <person name="Fujimori Y."/>
            <person name="Komiyama M."/>
            <person name="Tashiro H."/>
            <person name="Tanigami A."/>
            <person name="Fujiwara T."/>
            <person name="Ono T."/>
            <person name="Yamada K."/>
            <person name="Fujii Y."/>
            <person name="Ozaki K."/>
            <person name="Hirao M."/>
            <person name="Ohmori Y."/>
            <person name="Kawabata A."/>
            <person name="Hikiji T."/>
            <person name="Kobatake N."/>
            <person name="Inagaki H."/>
            <person name="Ikema Y."/>
            <person name="Okamoto S."/>
            <person name="Okitani R."/>
            <person name="Kawakami T."/>
            <person name="Noguchi S."/>
            <person name="Itoh T."/>
            <person name="Shigeta K."/>
            <person name="Senba T."/>
            <person name="Matsumura K."/>
            <person name="Nakajima Y."/>
            <person name="Mizuno T."/>
            <person name="Morinaga M."/>
            <person name="Sasaki M."/>
            <person name="Togashi T."/>
            <person name="Oyama M."/>
            <person name="Hata H."/>
            <person name="Watanabe M."/>
            <person name="Komatsu T."/>
            <person name="Mizushima-Sugano J."/>
            <person name="Satoh T."/>
            <person name="Shirai Y."/>
            <person name="Takahashi Y."/>
            <person name="Nakagawa K."/>
            <person name="Okumura K."/>
            <person name="Nagase T."/>
            <person name="Nomura N."/>
            <person name="Kikuchi H."/>
            <person name="Masuho Y."/>
            <person name="Yamashita R."/>
            <person name="Nakai K."/>
            <person name="Yada T."/>
            <person name="Nakamura Y."/>
            <person name="Ohara O."/>
            <person name="Isogai T."/>
            <person name="Sugano S."/>
        </authorList>
    </citation>
    <scope>NUCLEOTIDE SEQUENCE [LARGE SCALE MRNA] OF 133-718 (ISOFORM 1)</scope>
</reference>
<reference key="8">
    <citation type="journal article" date="2008" name="Proc. Natl. Acad. Sci. U.S.A.">
        <title>A quantitative atlas of mitotic phosphorylation.</title>
        <authorList>
            <person name="Dephoure N."/>
            <person name="Zhou C."/>
            <person name="Villen J."/>
            <person name="Beausoleil S.A."/>
            <person name="Bakalarski C.E."/>
            <person name="Elledge S.J."/>
            <person name="Gygi S.P."/>
        </authorList>
    </citation>
    <scope>IDENTIFICATION BY MASS SPECTROMETRY [LARGE SCALE ANALYSIS]</scope>
    <source>
        <tissue>Cervix carcinoma</tissue>
    </source>
</reference>
<comment type="subcellular location">
    <subcellularLocation>
        <location>Cytoplasm</location>
        <location>Cytoskeleton</location>
    </subcellularLocation>
</comment>
<comment type="alternative products">
    <event type="alternative splicing"/>
    <isoform>
        <id>Q9C0H6-1</id>
        <name>1</name>
        <sequence type="displayed"/>
    </isoform>
    <isoform>
        <id>Q9C0H6-2</id>
        <name>2</name>
        <name>KLHL4c</name>
        <sequence type="described" ref="VSP_002818"/>
    </isoform>
</comment>
<comment type="tissue specificity">
    <text>Expressed in adult fibroblasts and in a range of fetal tissues including tongue, palate, and mandible.</text>
</comment>
<comment type="sequence caution" evidence="5">
    <conflict type="erroneous initiation">
        <sequence resource="EMBL-CDS" id="BAB14199"/>
    </conflict>
</comment>
<comment type="sequence caution" evidence="5">
    <conflict type="erroneous initiation">
        <sequence resource="EMBL-CDS" id="BAB21778"/>
    </conflict>
</comment>
<keyword id="KW-0009">Actin-binding</keyword>
<keyword id="KW-0025">Alternative splicing</keyword>
<keyword id="KW-0963">Cytoplasm</keyword>
<keyword id="KW-0206">Cytoskeleton</keyword>
<keyword id="KW-0880">Kelch repeat</keyword>
<keyword id="KW-1267">Proteomics identification</keyword>
<keyword id="KW-1185">Reference proteome</keyword>
<keyword id="KW-0677">Repeat</keyword>
<feature type="chain" id="PRO_0000119104" description="Kelch-like protein 4">
    <location>
        <begin position="1"/>
        <end position="718"/>
    </location>
</feature>
<feature type="domain" description="BTB" evidence="1">
    <location>
        <begin position="182"/>
        <end position="249"/>
    </location>
</feature>
<feature type="repeat" description="Kelch 1">
    <location>
        <begin position="430"/>
        <end position="476"/>
    </location>
</feature>
<feature type="repeat" description="Kelch 2">
    <location>
        <begin position="477"/>
        <end position="523"/>
    </location>
</feature>
<feature type="repeat" description="Kelch 3">
    <location>
        <begin position="525"/>
        <end position="570"/>
    </location>
</feature>
<feature type="repeat" description="Kelch 4">
    <location>
        <begin position="571"/>
        <end position="617"/>
    </location>
</feature>
<feature type="repeat" description="Kelch 5">
    <location>
        <begin position="619"/>
        <end position="670"/>
    </location>
</feature>
<feature type="repeat" description="Kelch 6">
    <location>
        <begin position="671"/>
        <end position="717"/>
    </location>
</feature>
<feature type="region of interest" description="Disordered" evidence="2">
    <location>
        <begin position="46"/>
        <end position="69"/>
    </location>
</feature>
<feature type="splice variant" id="VSP_002818" description="In isoform 2." evidence="3 4">
    <original>EVPVNIGRAGACVVVVKLP</original>
    <variation>SMQELLQNFYTTQKLKETLGH</variation>
    <location>
        <begin position="700"/>
        <end position="718"/>
    </location>
</feature>
<proteinExistence type="evidence at protein level"/>